<accession>Q6GFE4</accession>
<keyword id="KW-0067">ATP-binding</keyword>
<keyword id="KW-0436">Ligase</keyword>
<keyword id="KW-0460">Magnesium</keyword>
<keyword id="KW-0479">Metal-binding</keyword>
<keyword id="KW-0520">NAD</keyword>
<keyword id="KW-0547">Nucleotide-binding</keyword>
<evidence type="ECO:0000255" key="1">
    <source>
        <dbReference type="HAMAP-Rule" id="MF_00193"/>
    </source>
</evidence>
<reference key="1">
    <citation type="journal article" date="2004" name="Proc. Natl. Acad. Sci. U.S.A.">
        <title>Complete genomes of two clinical Staphylococcus aureus strains: evidence for the rapid evolution of virulence and drug resistance.</title>
        <authorList>
            <person name="Holden M.T.G."/>
            <person name="Feil E.J."/>
            <person name="Lindsay J.A."/>
            <person name="Peacock S.J."/>
            <person name="Day N.P.J."/>
            <person name="Enright M.C."/>
            <person name="Foster T.J."/>
            <person name="Moore C.E."/>
            <person name="Hurst L."/>
            <person name="Atkin R."/>
            <person name="Barron A."/>
            <person name="Bason N."/>
            <person name="Bentley S.D."/>
            <person name="Chillingworth C."/>
            <person name="Chillingworth T."/>
            <person name="Churcher C."/>
            <person name="Clark L."/>
            <person name="Corton C."/>
            <person name="Cronin A."/>
            <person name="Doggett J."/>
            <person name="Dowd L."/>
            <person name="Feltwell T."/>
            <person name="Hance Z."/>
            <person name="Harris B."/>
            <person name="Hauser H."/>
            <person name="Holroyd S."/>
            <person name="Jagels K."/>
            <person name="James K.D."/>
            <person name="Lennard N."/>
            <person name="Line A."/>
            <person name="Mayes R."/>
            <person name="Moule S."/>
            <person name="Mungall K."/>
            <person name="Ormond D."/>
            <person name="Quail M.A."/>
            <person name="Rabbinowitsch E."/>
            <person name="Rutherford K.M."/>
            <person name="Sanders M."/>
            <person name="Sharp S."/>
            <person name="Simmonds M."/>
            <person name="Stevens K."/>
            <person name="Whitehead S."/>
            <person name="Barrell B.G."/>
            <person name="Spratt B.G."/>
            <person name="Parkhill J."/>
        </authorList>
    </citation>
    <scope>NUCLEOTIDE SEQUENCE [LARGE SCALE GENOMIC DNA]</scope>
    <source>
        <strain>MRSA252</strain>
    </source>
</reference>
<gene>
    <name evidence="1" type="primary">nadE</name>
    <name type="ordered locus">SAR2005</name>
</gene>
<feature type="chain" id="PRO_0000152197" description="NH(3)-dependent NAD(+) synthetase">
    <location>
        <begin position="1"/>
        <end position="273"/>
    </location>
</feature>
<feature type="binding site" evidence="1">
    <location>
        <begin position="47"/>
        <end position="54"/>
    </location>
    <ligand>
        <name>ATP</name>
        <dbReference type="ChEBI" id="CHEBI:30616"/>
    </ligand>
</feature>
<feature type="binding site" evidence="1">
    <location>
        <position position="53"/>
    </location>
    <ligand>
        <name>Mg(2+)</name>
        <dbReference type="ChEBI" id="CHEBI:18420"/>
    </ligand>
</feature>
<feature type="binding site" evidence="1">
    <location>
        <position position="139"/>
    </location>
    <ligand>
        <name>deamido-NAD(+)</name>
        <dbReference type="ChEBI" id="CHEBI:58437"/>
    </ligand>
</feature>
<feature type="binding site" evidence="1">
    <location>
        <position position="159"/>
    </location>
    <ligand>
        <name>ATP</name>
        <dbReference type="ChEBI" id="CHEBI:30616"/>
    </ligand>
</feature>
<feature type="binding site" evidence="1">
    <location>
        <position position="164"/>
    </location>
    <ligand>
        <name>Mg(2+)</name>
        <dbReference type="ChEBI" id="CHEBI:18420"/>
    </ligand>
</feature>
<feature type="binding site" evidence="1">
    <location>
        <position position="172"/>
    </location>
    <ligand>
        <name>deamido-NAD(+)</name>
        <dbReference type="ChEBI" id="CHEBI:58437"/>
    </ligand>
</feature>
<feature type="binding site" evidence="1">
    <location>
        <position position="179"/>
    </location>
    <ligand>
        <name>deamido-NAD(+)</name>
        <dbReference type="ChEBI" id="CHEBI:58437"/>
    </ligand>
</feature>
<feature type="binding site" evidence="1">
    <location>
        <position position="188"/>
    </location>
    <ligand>
        <name>ATP</name>
        <dbReference type="ChEBI" id="CHEBI:30616"/>
    </ligand>
</feature>
<feature type="binding site" evidence="1">
    <location>
        <position position="210"/>
    </location>
    <ligand>
        <name>ATP</name>
        <dbReference type="ChEBI" id="CHEBI:30616"/>
    </ligand>
</feature>
<feature type="binding site" evidence="1">
    <location>
        <begin position="259"/>
        <end position="260"/>
    </location>
    <ligand>
        <name>deamido-NAD(+)</name>
        <dbReference type="ChEBI" id="CHEBI:58437"/>
    </ligand>
</feature>
<protein>
    <recommendedName>
        <fullName evidence="1">NH(3)-dependent NAD(+) synthetase</fullName>
        <ecNumber evidence="1">6.3.1.5</ecNumber>
    </recommendedName>
</protein>
<proteinExistence type="inferred from homology"/>
<name>NADE_STAAR</name>
<dbReference type="EC" id="6.3.1.5" evidence="1"/>
<dbReference type="EMBL" id="BX571856">
    <property type="protein sequence ID" value="CAG40990.1"/>
    <property type="molecule type" value="Genomic_DNA"/>
</dbReference>
<dbReference type="RefSeq" id="WP_000040861.1">
    <property type="nucleotide sequence ID" value="NC_002952.2"/>
</dbReference>
<dbReference type="SMR" id="Q6GFE4"/>
<dbReference type="KEGG" id="sar:SAR2005"/>
<dbReference type="HOGENOM" id="CLU_059327_3_0_9"/>
<dbReference type="UniPathway" id="UPA00253">
    <property type="reaction ID" value="UER00333"/>
</dbReference>
<dbReference type="Proteomes" id="UP000000596">
    <property type="component" value="Chromosome"/>
</dbReference>
<dbReference type="GO" id="GO:0005737">
    <property type="term" value="C:cytoplasm"/>
    <property type="evidence" value="ECO:0007669"/>
    <property type="project" value="InterPro"/>
</dbReference>
<dbReference type="GO" id="GO:0005524">
    <property type="term" value="F:ATP binding"/>
    <property type="evidence" value="ECO:0007669"/>
    <property type="project" value="UniProtKB-UniRule"/>
</dbReference>
<dbReference type="GO" id="GO:0004359">
    <property type="term" value="F:glutaminase activity"/>
    <property type="evidence" value="ECO:0007669"/>
    <property type="project" value="InterPro"/>
</dbReference>
<dbReference type="GO" id="GO:0046872">
    <property type="term" value="F:metal ion binding"/>
    <property type="evidence" value="ECO:0007669"/>
    <property type="project" value="UniProtKB-KW"/>
</dbReference>
<dbReference type="GO" id="GO:0003952">
    <property type="term" value="F:NAD+ synthase (glutamine-hydrolyzing) activity"/>
    <property type="evidence" value="ECO:0007669"/>
    <property type="project" value="InterPro"/>
</dbReference>
<dbReference type="GO" id="GO:0008795">
    <property type="term" value="F:NAD+ synthase activity"/>
    <property type="evidence" value="ECO:0007669"/>
    <property type="project" value="UniProtKB-UniRule"/>
</dbReference>
<dbReference type="GO" id="GO:0009435">
    <property type="term" value="P:NAD biosynthetic process"/>
    <property type="evidence" value="ECO:0007669"/>
    <property type="project" value="UniProtKB-UniRule"/>
</dbReference>
<dbReference type="CDD" id="cd00553">
    <property type="entry name" value="NAD_synthase"/>
    <property type="match status" value="1"/>
</dbReference>
<dbReference type="FunFam" id="3.40.50.620:FF:000015">
    <property type="entry name" value="NH(3)-dependent NAD(+) synthetase"/>
    <property type="match status" value="1"/>
</dbReference>
<dbReference type="Gene3D" id="3.40.50.620">
    <property type="entry name" value="HUPs"/>
    <property type="match status" value="1"/>
</dbReference>
<dbReference type="HAMAP" id="MF_00193">
    <property type="entry name" value="NadE_ammonia_dep"/>
    <property type="match status" value="1"/>
</dbReference>
<dbReference type="InterPro" id="IPR022310">
    <property type="entry name" value="NAD/GMP_synthase"/>
</dbReference>
<dbReference type="InterPro" id="IPR003694">
    <property type="entry name" value="NAD_synthase"/>
</dbReference>
<dbReference type="InterPro" id="IPR022926">
    <property type="entry name" value="NH(3)-dep_NAD(+)_synth"/>
</dbReference>
<dbReference type="InterPro" id="IPR014729">
    <property type="entry name" value="Rossmann-like_a/b/a_fold"/>
</dbReference>
<dbReference type="NCBIfam" id="TIGR00552">
    <property type="entry name" value="nadE"/>
    <property type="match status" value="1"/>
</dbReference>
<dbReference type="NCBIfam" id="NF001979">
    <property type="entry name" value="PRK00768.1"/>
    <property type="match status" value="1"/>
</dbReference>
<dbReference type="PANTHER" id="PTHR23090">
    <property type="entry name" value="NH 3 /GLUTAMINE-DEPENDENT NAD + SYNTHETASE"/>
    <property type="match status" value="1"/>
</dbReference>
<dbReference type="PANTHER" id="PTHR23090:SF7">
    <property type="entry name" value="NH(3)-DEPENDENT NAD(+) SYNTHETASE"/>
    <property type="match status" value="1"/>
</dbReference>
<dbReference type="Pfam" id="PF02540">
    <property type="entry name" value="NAD_synthase"/>
    <property type="match status" value="1"/>
</dbReference>
<dbReference type="SUPFAM" id="SSF52402">
    <property type="entry name" value="Adenine nucleotide alpha hydrolases-like"/>
    <property type="match status" value="1"/>
</dbReference>
<organism>
    <name type="scientific">Staphylococcus aureus (strain MRSA252)</name>
    <dbReference type="NCBI Taxonomy" id="282458"/>
    <lineage>
        <taxon>Bacteria</taxon>
        <taxon>Bacillati</taxon>
        <taxon>Bacillota</taxon>
        <taxon>Bacilli</taxon>
        <taxon>Bacillales</taxon>
        <taxon>Staphylococcaceae</taxon>
        <taxon>Staphylococcus</taxon>
    </lineage>
</organism>
<sequence length="273" mass="30581">MSKLQDVIVQEMKVKKRIDSAEEIAELKQFIKSYVQSHSFIKSLVLGISGGQDSTLVGKLVQMSVNELREEGIDCTFIAVKLPYGVQKDADEVEQALQFIEPDEIVTVNIKPAVDQSVQSLKEAGIVLTDFQKGNEKARERMKVQFSIASNRQGIVVGTDHSAENITGFYTKYGDGAADIAPIFGLNKRQGRQLLAYLGAPKQLYEKTPTADLEDDKPQLPDEDALGVTYEAIDNYLEGKPVTPEEQKVIENHYIRNAHKRELAYTRYTWPKS</sequence>
<comment type="function">
    <text evidence="1">Catalyzes the ATP-dependent amidation of deamido-NAD to form NAD. Uses ammonia as a nitrogen source.</text>
</comment>
<comment type="catalytic activity">
    <reaction evidence="1">
        <text>deamido-NAD(+) + NH4(+) + ATP = AMP + diphosphate + NAD(+) + H(+)</text>
        <dbReference type="Rhea" id="RHEA:21188"/>
        <dbReference type="ChEBI" id="CHEBI:15378"/>
        <dbReference type="ChEBI" id="CHEBI:28938"/>
        <dbReference type="ChEBI" id="CHEBI:30616"/>
        <dbReference type="ChEBI" id="CHEBI:33019"/>
        <dbReference type="ChEBI" id="CHEBI:57540"/>
        <dbReference type="ChEBI" id="CHEBI:58437"/>
        <dbReference type="ChEBI" id="CHEBI:456215"/>
        <dbReference type="EC" id="6.3.1.5"/>
    </reaction>
</comment>
<comment type="pathway">
    <text evidence="1">Cofactor biosynthesis; NAD(+) biosynthesis; NAD(+) from deamido-NAD(+) (ammonia route): step 1/1.</text>
</comment>
<comment type="subunit">
    <text evidence="1">Homodimer.</text>
</comment>
<comment type="similarity">
    <text evidence="1">Belongs to the NAD synthetase family.</text>
</comment>